<protein>
    <recommendedName>
        <fullName>p21-activated protein kinase-interacting protein 1</fullName>
    </recommendedName>
    <alternativeName>
        <fullName>PAK1-interacting protein 1</fullName>
    </alternativeName>
</protein>
<evidence type="ECO:0000250" key="1">
    <source>
        <dbReference type="UniProtKB" id="Q9NWT1"/>
    </source>
</evidence>
<evidence type="ECO:0000256" key="2">
    <source>
        <dbReference type="SAM" id="MobiDB-lite"/>
    </source>
</evidence>
<name>PK1IP_BOVIN</name>
<proteinExistence type="evidence at transcript level"/>
<accession>Q5EA99</accession>
<comment type="function">
    <text evidence="1">Negatively regulates the PAK1 kinase. PAK1 is a member of the PAK kinase family, which has been shown to play a positive role in the regulation of signaling pathways involving MAPK8 and RELA. PAK1 exists as an inactive homodimer, which is activated by binding of small GTPases such as CDC42 to an N-terminal regulatory domain. PAK1IP1 also binds to the N-terminus of PAK1, and inhibits the specific activation of PAK1 by CDC42. May be involved in ribosomal large subunit assembly.</text>
</comment>
<comment type="subunit">
    <text evidence="1">Interacts with PAK1.</text>
</comment>
<comment type="subcellular location">
    <subcellularLocation>
        <location evidence="1">Nucleus</location>
        <location evidence="1">Nucleolus</location>
    </subcellularLocation>
</comment>
<feature type="chain" id="PRO_0000051124" description="p21-activated protein kinase-interacting protein 1">
    <location>
        <begin position="1"/>
        <end position="392"/>
    </location>
</feature>
<feature type="repeat" description="WD 1">
    <location>
        <begin position="40"/>
        <end position="77"/>
    </location>
</feature>
<feature type="repeat" description="WD 2">
    <location>
        <begin position="80"/>
        <end position="118"/>
    </location>
</feature>
<feature type="repeat" description="WD 3">
    <location>
        <begin position="121"/>
        <end position="160"/>
    </location>
</feature>
<feature type="repeat" description="WD 4">
    <location>
        <begin position="202"/>
        <end position="240"/>
    </location>
</feature>
<feature type="repeat" description="WD 5">
    <location>
        <begin position="243"/>
        <end position="284"/>
    </location>
</feature>
<feature type="region of interest" description="Disordered" evidence="2">
    <location>
        <begin position="309"/>
        <end position="392"/>
    </location>
</feature>
<feature type="compositionally biased region" description="Basic and acidic residues" evidence="2">
    <location>
        <begin position="325"/>
        <end position="351"/>
    </location>
</feature>
<feature type="compositionally biased region" description="Polar residues" evidence="2">
    <location>
        <begin position="355"/>
        <end position="368"/>
    </location>
</feature>
<feature type="compositionally biased region" description="Basic residues" evidence="2">
    <location>
        <begin position="381"/>
        <end position="392"/>
    </location>
</feature>
<sequence>MEVVAGCYEQVLFGFAVHPEPVGDGHRERWAPVADFTHHAHTASLSAVAVNSRFVVTGSKDETIHIYDMKKKVDHGALMHHNGTITCLKFHGNRHLISGAEDGLICVWDARRWECLKSIRAHKGHVTFLSIHPSGRLALSVGTDKTLRTWNLVEGRSAFIKNIKQSAHIVEWSPKGEKYVVVILNRIDVYQLDTASVSGTITNERRVSSVTFLSESVLTVAGDEEVVRFFDCDSLTCLSEFKAHENRVKDMFSFETPEHHVLVTASSDGFIKMWKLKQDKKVSPSLLCEINTNARLTCLGVWLDRRTDTKESPPAAAEPAPVSKEQSRRNKEESGHAVQEEEKQPKPDTEKCSLTGDSNKPTRGNSLVSAKKRKTVEMLEKKRKKKKIRMMQ</sequence>
<keyword id="KW-0539">Nucleus</keyword>
<keyword id="KW-1185">Reference proteome</keyword>
<keyword id="KW-0677">Repeat</keyword>
<keyword id="KW-0690">Ribosome biogenesis</keyword>
<keyword id="KW-0734">Signal transduction inhibitor</keyword>
<keyword id="KW-0853">WD repeat</keyword>
<organism>
    <name type="scientific">Bos taurus</name>
    <name type="common">Bovine</name>
    <dbReference type="NCBI Taxonomy" id="9913"/>
    <lineage>
        <taxon>Eukaryota</taxon>
        <taxon>Metazoa</taxon>
        <taxon>Chordata</taxon>
        <taxon>Craniata</taxon>
        <taxon>Vertebrata</taxon>
        <taxon>Euteleostomi</taxon>
        <taxon>Mammalia</taxon>
        <taxon>Eutheria</taxon>
        <taxon>Laurasiatheria</taxon>
        <taxon>Artiodactyla</taxon>
        <taxon>Ruminantia</taxon>
        <taxon>Pecora</taxon>
        <taxon>Bovidae</taxon>
        <taxon>Bovinae</taxon>
        <taxon>Bos</taxon>
    </lineage>
</organism>
<reference key="1">
    <citation type="journal article" date="2005" name="BMC Genomics">
        <title>Characterization of 954 bovine full-CDS cDNA sequences.</title>
        <authorList>
            <person name="Harhay G.P."/>
            <person name="Sonstegard T.S."/>
            <person name="Keele J.W."/>
            <person name="Heaton M.P."/>
            <person name="Clawson M.L."/>
            <person name="Snelling W.M."/>
            <person name="Wiedmann R.T."/>
            <person name="Van Tassell C.P."/>
            <person name="Smith T.P.L."/>
        </authorList>
    </citation>
    <scope>NUCLEOTIDE SEQUENCE [LARGE SCALE MRNA]</scope>
</reference>
<dbReference type="EMBL" id="BT020668">
    <property type="protein sequence ID" value="AAX08685.1"/>
    <property type="molecule type" value="mRNA"/>
</dbReference>
<dbReference type="EMBL" id="BT020670">
    <property type="protein sequence ID" value="AAX08687.1"/>
    <property type="molecule type" value="mRNA"/>
</dbReference>
<dbReference type="RefSeq" id="NP_001014852.1">
    <property type="nucleotide sequence ID" value="NM_001014852.1"/>
</dbReference>
<dbReference type="SMR" id="Q5EA99"/>
<dbReference type="FunCoup" id="Q5EA99">
    <property type="interactions" value="2800"/>
</dbReference>
<dbReference type="STRING" id="9913.ENSBTAP00000024854"/>
<dbReference type="PaxDb" id="9913-ENSBTAP00000024854"/>
<dbReference type="PeptideAtlas" id="Q5EA99"/>
<dbReference type="GeneID" id="505125"/>
<dbReference type="KEGG" id="bta:505125"/>
<dbReference type="CTD" id="55003"/>
<dbReference type="eggNOG" id="KOG0294">
    <property type="taxonomic scope" value="Eukaryota"/>
</dbReference>
<dbReference type="InParanoid" id="Q5EA99"/>
<dbReference type="OrthoDB" id="308449at2759"/>
<dbReference type="Proteomes" id="UP000009136">
    <property type="component" value="Unplaced"/>
</dbReference>
<dbReference type="GO" id="GO:0005730">
    <property type="term" value="C:nucleolus"/>
    <property type="evidence" value="ECO:0000318"/>
    <property type="project" value="GO_Central"/>
</dbReference>
<dbReference type="GO" id="GO:0004860">
    <property type="term" value="F:protein kinase inhibitor activity"/>
    <property type="evidence" value="ECO:0000318"/>
    <property type="project" value="GO_Central"/>
</dbReference>
<dbReference type="GO" id="GO:0000463">
    <property type="term" value="P:maturation of LSU-rRNA from tricistronic rRNA transcript (SSU-rRNA, 5.8S rRNA, LSU-rRNA)"/>
    <property type="evidence" value="ECO:0000318"/>
    <property type="project" value="GO_Central"/>
</dbReference>
<dbReference type="GO" id="GO:0009968">
    <property type="term" value="P:negative regulation of signal transduction"/>
    <property type="evidence" value="ECO:0007669"/>
    <property type="project" value="UniProtKB-KW"/>
</dbReference>
<dbReference type="GO" id="GO:1901796">
    <property type="term" value="P:regulation of signal transduction by p53 class mediator"/>
    <property type="evidence" value="ECO:0000250"/>
    <property type="project" value="UniProtKB"/>
</dbReference>
<dbReference type="GO" id="GO:0042273">
    <property type="term" value="P:ribosomal large subunit biogenesis"/>
    <property type="evidence" value="ECO:0000250"/>
    <property type="project" value="UniProtKB"/>
</dbReference>
<dbReference type="FunFam" id="2.130.10.10:FF:001807">
    <property type="entry name" value="p21-activated protein kinase-interacting protein 1"/>
    <property type="match status" value="1"/>
</dbReference>
<dbReference type="FunFam" id="2.130.10.10:FF:000424">
    <property type="entry name" value="p21-activated protein kinase-interacting protein 1-like"/>
    <property type="match status" value="1"/>
</dbReference>
<dbReference type="Gene3D" id="2.130.10.10">
    <property type="entry name" value="YVTN repeat-like/Quinoprotein amine dehydrogenase"/>
    <property type="match status" value="2"/>
</dbReference>
<dbReference type="InterPro" id="IPR020472">
    <property type="entry name" value="G-protein_beta_WD-40_rep"/>
</dbReference>
<dbReference type="InterPro" id="IPR051959">
    <property type="entry name" value="PAK1-Kinase_Regulator"/>
</dbReference>
<dbReference type="InterPro" id="IPR015943">
    <property type="entry name" value="WD40/YVTN_repeat-like_dom_sf"/>
</dbReference>
<dbReference type="InterPro" id="IPR019775">
    <property type="entry name" value="WD40_repeat_CS"/>
</dbReference>
<dbReference type="InterPro" id="IPR036322">
    <property type="entry name" value="WD40_repeat_dom_sf"/>
</dbReference>
<dbReference type="InterPro" id="IPR001680">
    <property type="entry name" value="WD40_rpt"/>
</dbReference>
<dbReference type="PANTHER" id="PTHR44675:SF1">
    <property type="entry name" value="P21-ACTIVATED PROTEIN KINASE-INTERACTING PROTEIN 1"/>
    <property type="match status" value="1"/>
</dbReference>
<dbReference type="PANTHER" id="PTHR44675">
    <property type="entry name" value="PAK1 INTERACTING PROTEIN 1"/>
    <property type="match status" value="1"/>
</dbReference>
<dbReference type="Pfam" id="PF00400">
    <property type="entry name" value="WD40"/>
    <property type="match status" value="4"/>
</dbReference>
<dbReference type="PRINTS" id="PR00320">
    <property type="entry name" value="GPROTEINBRPT"/>
</dbReference>
<dbReference type="SMART" id="SM00320">
    <property type="entry name" value="WD40"/>
    <property type="match status" value="5"/>
</dbReference>
<dbReference type="SUPFAM" id="SSF50978">
    <property type="entry name" value="WD40 repeat-like"/>
    <property type="match status" value="1"/>
</dbReference>
<dbReference type="PROSITE" id="PS00678">
    <property type="entry name" value="WD_REPEATS_1"/>
    <property type="match status" value="2"/>
</dbReference>
<dbReference type="PROSITE" id="PS50082">
    <property type="entry name" value="WD_REPEATS_2"/>
    <property type="match status" value="4"/>
</dbReference>
<dbReference type="PROSITE" id="PS50294">
    <property type="entry name" value="WD_REPEATS_REGION"/>
    <property type="match status" value="1"/>
</dbReference>
<gene>
    <name type="primary">PAK1IP1</name>
</gene>